<gene>
    <name evidence="1" type="primary">trpF</name>
    <name type="ordered locus">MmarC7_0246</name>
</gene>
<feature type="chain" id="PRO_1000057878" description="N-(5'-phosphoribosyl)anthranilate isomerase">
    <location>
        <begin position="1"/>
        <end position="208"/>
    </location>
</feature>
<evidence type="ECO:0000255" key="1">
    <source>
        <dbReference type="HAMAP-Rule" id="MF_00135"/>
    </source>
</evidence>
<name>TRPF_METM7</name>
<dbReference type="EC" id="5.3.1.24" evidence="1"/>
<dbReference type="EMBL" id="CP000745">
    <property type="protein sequence ID" value="ABR65316.1"/>
    <property type="molecule type" value="Genomic_DNA"/>
</dbReference>
<dbReference type="SMR" id="A6VFU0"/>
<dbReference type="STRING" id="426368.MmarC7_0246"/>
<dbReference type="KEGG" id="mmz:MmarC7_0246"/>
<dbReference type="eggNOG" id="arCOG01983">
    <property type="taxonomic scope" value="Archaea"/>
</dbReference>
<dbReference type="HOGENOM" id="CLU_076364_2_1_2"/>
<dbReference type="OrthoDB" id="27513at2157"/>
<dbReference type="UniPathway" id="UPA00035">
    <property type="reaction ID" value="UER00042"/>
</dbReference>
<dbReference type="GO" id="GO:0004640">
    <property type="term" value="F:phosphoribosylanthranilate isomerase activity"/>
    <property type="evidence" value="ECO:0007669"/>
    <property type="project" value="UniProtKB-UniRule"/>
</dbReference>
<dbReference type="GO" id="GO:0000162">
    <property type="term" value="P:L-tryptophan biosynthetic process"/>
    <property type="evidence" value="ECO:0007669"/>
    <property type="project" value="UniProtKB-UniRule"/>
</dbReference>
<dbReference type="CDD" id="cd00405">
    <property type="entry name" value="PRAI"/>
    <property type="match status" value="1"/>
</dbReference>
<dbReference type="Gene3D" id="3.20.20.70">
    <property type="entry name" value="Aldolase class I"/>
    <property type="match status" value="1"/>
</dbReference>
<dbReference type="HAMAP" id="MF_00135">
    <property type="entry name" value="PRAI"/>
    <property type="match status" value="1"/>
</dbReference>
<dbReference type="InterPro" id="IPR013785">
    <property type="entry name" value="Aldolase_TIM"/>
</dbReference>
<dbReference type="InterPro" id="IPR001240">
    <property type="entry name" value="PRAI_dom"/>
</dbReference>
<dbReference type="InterPro" id="IPR011060">
    <property type="entry name" value="RibuloseP-bd_barrel"/>
</dbReference>
<dbReference type="InterPro" id="IPR044643">
    <property type="entry name" value="TrpF_fam"/>
</dbReference>
<dbReference type="NCBIfam" id="NF002304">
    <property type="entry name" value="PRK01222.2-4"/>
    <property type="match status" value="1"/>
</dbReference>
<dbReference type="PANTHER" id="PTHR42894">
    <property type="entry name" value="N-(5'-PHOSPHORIBOSYL)ANTHRANILATE ISOMERASE"/>
    <property type="match status" value="1"/>
</dbReference>
<dbReference type="PANTHER" id="PTHR42894:SF1">
    <property type="entry name" value="N-(5'-PHOSPHORIBOSYL)ANTHRANILATE ISOMERASE"/>
    <property type="match status" value="1"/>
</dbReference>
<dbReference type="Pfam" id="PF00697">
    <property type="entry name" value="PRAI"/>
    <property type="match status" value="1"/>
</dbReference>
<dbReference type="SUPFAM" id="SSF51366">
    <property type="entry name" value="Ribulose-phoshate binding barrel"/>
    <property type="match status" value="1"/>
</dbReference>
<proteinExistence type="inferred from homology"/>
<comment type="catalytic activity">
    <reaction evidence="1">
        <text>N-(5-phospho-beta-D-ribosyl)anthranilate = 1-(2-carboxyphenylamino)-1-deoxy-D-ribulose 5-phosphate</text>
        <dbReference type="Rhea" id="RHEA:21540"/>
        <dbReference type="ChEBI" id="CHEBI:18277"/>
        <dbReference type="ChEBI" id="CHEBI:58613"/>
        <dbReference type="EC" id="5.3.1.24"/>
    </reaction>
</comment>
<comment type="pathway">
    <text evidence="1">Amino-acid biosynthesis; L-tryptophan biosynthesis; L-tryptophan from chorismate: step 3/5.</text>
</comment>
<comment type="similarity">
    <text evidence="1">Belongs to the TrpF family.</text>
</comment>
<keyword id="KW-0028">Amino-acid biosynthesis</keyword>
<keyword id="KW-0057">Aromatic amino acid biosynthesis</keyword>
<keyword id="KW-0413">Isomerase</keyword>
<keyword id="KW-0822">Tryptophan biosynthesis</keyword>
<organism>
    <name type="scientific">Methanococcus maripaludis (strain C7 / ATCC BAA-1331)</name>
    <dbReference type="NCBI Taxonomy" id="426368"/>
    <lineage>
        <taxon>Archaea</taxon>
        <taxon>Methanobacteriati</taxon>
        <taxon>Methanobacteriota</taxon>
        <taxon>Methanomada group</taxon>
        <taxon>Methanococci</taxon>
        <taxon>Methanococcales</taxon>
        <taxon>Methanococcaceae</taxon>
        <taxon>Methanococcus</taxon>
    </lineage>
</organism>
<protein>
    <recommendedName>
        <fullName evidence="1">N-(5'-phosphoribosyl)anthranilate isomerase</fullName>
        <shortName evidence="1">PRAI</shortName>
        <ecNumber evidence="1">5.3.1.24</ecNumber>
    </recommendedName>
</protein>
<reference key="1">
    <citation type="submission" date="2007-06" db="EMBL/GenBank/DDBJ databases">
        <title>Complete sequence of Methanococcus maripaludis C7.</title>
        <authorList>
            <consortium name="US DOE Joint Genome Institute"/>
            <person name="Copeland A."/>
            <person name="Lucas S."/>
            <person name="Lapidus A."/>
            <person name="Barry K."/>
            <person name="Glavina del Rio T."/>
            <person name="Dalin E."/>
            <person name="Tice H."/>
            <person name="Pitluck S."/>
            <person name="Clum A."/>
            <person name="Schmutz J."/>
            <person name="Larimer F."/>
            <person name="Land M."/>
            <person name="Hauser L."/>
            <person name="Kyrpides N."/>
            <person name="Anderson I."/>
            <person name="Sieprawska-Lupa M."/>
            <person name="Whitman W.B."/>
            <person name="Richardson P."/>
        </authorList>
    </citation>
    <scope>NUCLEOTIDE SEQUENCE [LARGE SCALE GENOMIC DNA]</scope>
    <source>
        <strain>C7 / ATCC BAA-1331</strain>
    </source>
</reference>
<accession>A6VFU0</accession>
<sequence length="208" mass="23247">MFIKICGIKTPEELEIVESYGNATGVILECASKRRIGLETAKNLVNLSNIPVFAVSTTSEVLVWENIIKLTNTNYLQMHSDIDQKTIDFIKNEYGCFIMKSFKIPETSESPEIDAEKIISDIETYEVDRILLDTGKGCGQTHDHRISQIIAKKFDIILAGGLDPDNVFDIVKNVKPFGVDVSSGVEANNSKDEELIKRFCENVKSVKL</sequence>